<gene>
    <name type="primary">pgk</name>
    <name type="ordered locus">PF1057</name>
</gene>
<accession>P61883</accession>
<accession>P50316</accession>
<proteinExistence type="inferred from homology"/>
<protein>
    <recommendedName>
        <fullName>Phosphoglycerate kinase</fullName>
        <ecNumber>2.7.2.3</ecNumber>
    </recommendedName>
</protein>
<reference key="1">
    <citation type="journal article" date="1999" name="Genetics">
        <title>Divergence of the hyperthermophilic archaea Pyrococcus furiosus and P. horikoshii inferred from complete genomic sequences.</title>
        <authorList>
            <person name="Maeder D.L."/>
            <person name="Weiss R.B."/>
            <person name="Dunn D.M."/>
            <person name="Cherry J.L."/>
            <person name="Gonzalez J.M."/>
            <person name="DiRuggiero J."/>
            <person name="Robb F.T."/>
        </authorList>
    </citation>
    <scope>NUCLEOTIDE SEQUENCE [LARGE SCALE GENOMIC DNA]</scope>
    <source>
        <strain>ATCC 43587 / DSM 3638 / JCM 8422 / Vc1</strain>
    </source>
</reference>
<dbReference type="EC" id="2.7.2.3"/>
<dbReference type="EMBL" id="AE009950">
    <property type="protein sequence ID" value="AAL81181.1"/>
    <property type="molecule type" value="Genomic_DNA"/>
</dbReference>
<dbReference type="RefSeq" id="WP_011012194.1">
    <property type="nucleotide sequence ID" value="NZ_CP023154.1"/>
</dbReference>
<dbReference type="SMR" id="P61883"/>
<dbReference type="STRING" id="186497.PF1057"/>
<dbReference type="PaxDb" id="186497-PF1057"/>
<dbReference type="KEGG" id="pfu:PF1057"/>
<dbReference type="PATRIC" id="fig|186497.12.peg.1118"/>
<dbReference type="eggNOG" id="arCOG00496">
    <property type="taxonomic scope" value="Archaea"/>
</dbReference>
<dbReference type="HOGENOM" id="CLU_025427_0_2_2"/>
<dbReference type="OrthoDB" id="6575at2157"/>
<dbReference type="PhylomeDB" id="P61883"/>
<dbReference type="BRENDA" id="2.7.2.3">
    <property type="organism ID" value="5243"/>
</dbReference>
<dbReference type="UniPathway" id="UPA00109">
    <property type="reaction ID" value="UER00185"/>
</dbReference>
<dbReference type="Proteomes" id="UP000001013">
    <property type="component" value="Chromosome"/>
</dbReference>
<dbReference type="GO" id="GO:0005829">
    <property type="term" value="C:cytosol"/>
    <property type="evidence" value="ECO:0007669"/>
    <property type="project" value="TreeGrafter"/>
</dbReference>
<dbReference type="GO" id="GO:0043531">
    <property type="term" value="F:ADP binding"/>
    <property type="evidence" value="ECO:0007669"/>
    <property type="project" value="TreeGrafter"/>
</dbReference>
<dbReference type="GO" id="GO:0005524">
    <property type="term" value="F:ATP binding"/>
    <property type="evidence" value="ECO:0007669"/>
    <property type="project" value="UniProtKB-KW"/>
</dbReference>
<dbReference type="GO" id="GO:0004618">
    <property type="term" value="F:phosphoglycerate kinase activity"/>
    <property type="evidence" value="ECO:0007669"/>
    <property type="project" value="UniProtKB-UniRule"/>
</dbReference>
<dbReference type="GO" id="GO:0006094">
    <property type="term" value="P:gluconeogenesis"/>
    <property type="evidence" value="ECO:0007669"/>
    <property type="project" value="TreeGrafter"/>
</dbReference>
<dbReference type="GO" id="GO:0006096">
    <property type="term" value="P:glycolytic process"/>
    <property type="evidence" value="ECO:0007669"/>
    <property type="project" value="UniProtKB-UniRule"/>
</dbReference>
<dbReference type="FunFam" id="3.40.50.1260:FF:000006">
    <property type="entry name" value="Phosphoglycerate kinase"/>
    <property type="match status" value="1"/>
</dbReference>
<dbReference type="FunFam" id="3.40.50.1260:FF:000012">
    <property type="entry name" value="Phosphoglycerate kinase"/>
    <property type="match status" value="1"/>
</dbReference>
<dbReference type="Gene3D" id="3.40.50.1260">
    <property type="entry name" value="Phosphoglycerate kinase, N-terminal domain"/>
    <property type="match status" value="2"/>
</dbReference>
<dbReference type="HAMAP" id="MF_00145">
    <property type="entry name" value="Phosphoglyc_kinase"/>
    <property type="match status" value="1"/>
</dbReference>
<dbReference type="InterPro" id="IPR001576">
    <property type="entry name" value="Phosphoglycerate_kinase"/>
</dbReference>
<dbReference type="InterPro" id="IPR015911">
    <property type="entry name" value="Phosphoglycerate_kinase_CS"/>
</dbReference>
<dbReference type="InterPro" id="IPR015824">
    <property type="entry name" value="Phosphoglycerate_kinase_N"/>
</dbReference>
<dbReference type="InterPro" id="IPR036043">
    <property type="entry name" value="Phosphoglycerate_kinase_sf"/>
</dbReference>
<dbReference type="PANTHER" id="PTHR11406">
    <property type="entry name" value="PHOSPHOGLYCERATE KINASE"/>
    <property type="match status" value="1"/>
</dbReference>
<dbReference type="PANTHER" id="PTHR11406:SF23">
    <property type="entry name" value="PHOSPHOGLYCERATE KINASE 1, CHLOROPLASTIC-RELATED"/>
    <property type="match status" value="1"/>
</dbReference>
<dbReference type="Pfam" id="PF00162">
    <property type="entry name" value="PGK"/>
    <property type="match status" value="1"/>
</dbReference>
<dbReference type="PIRSF" id="PIRSF000724">
    <property type="entry name" value="Pgk"/>
    <property type="match status" value="1"/>
</dbReference>
<dbReference type="PRINTS" id="PR00477">
    <property type="entry name" value="PHGLYCKINASE"/>
</dbReference>
<dbReference type="SUPFAM" id="SSF53748">
    <property type="entry name" value="Phosphoglycerate kinase"/>
    <property type="match status" value="1"/>
</dbReference>
<dbReference type="PROSITE" id="PS00111">
    <property type="entry name" value="PGLYCERATE_KINASE"/>
    <property type="match status" value="1"/>
</dbReference>
<comment type="catalytic activity">
    <reaction>
        <text>(2R)-3-phosphoglycerate + ATP = (2R)-3-phospho-glyceroyl phosphate + ADP</text>
        <dbReference type="Rhea" id="RHEA:14801"/>
        <dbReference type="ChEBI" id="CHEBI:30616"/>
        <dbReference type="ChEBI" id="CHEBI:57604"/>
        <dbReference type="ChEBI" id="CHEBI:58272"/>
        <dbReference type="ChEBI" id="CHEBI:456216"/>
        <dbReference type="EC" id="2.7.2.3"/>
    </reaction>
</comment>
<comment type="pathway">
    <text>Carbohydrate degradation; glycolysis; pyruvate from D-glyceraldehyde 3-phosphate: step 2/5.</text>
</comment>
<comment type="subunit">
    <text evidence="1">Homodimer.</text>
</comment>
<comment type="subcellular location">
    <subcellularLocation>
        <location evidence="1">Cytoplasm</location>
    </subcellularLocation>
</comment>
<comment type="similarity">
    <text evidence="2">Belongs to the phosphoglycerate kinase family.</text>
</comment>
<evidence type="ECO:0000250" key="1"/>
<evidence type="ECO:0000305" key="2"/>
<keyword id="KW-0067">ATP-binding</keyword>
<keyword id="KW-0963">Cytoplasm</keyword>
<keyword id="KW-0324">Glycolysis</keyword>
<keyword id="KW-0418">Kinase</keyword>
<keyword id="KW-0547">Nucleotide-binding</keyword>
<keyword id="KW-1185">Reference proteome</keyword>
<keyword id="KW-0808">Transferase</keyword>
<feature type="chain" id="PRO_0000146066" description="Phosphoglycerate kinase">
    <location>
        <begin position="1"/>
        <end position="410"/>
    </location>
</feature>
<feature type="binding site" evidence="1">
    <location>
        <begin position="19"/>
        <end position="21"/>
    </location>
    <ligand>
        <name>substrate</name>
    </ligand>
</feature>
<feature type="binding site" evidence="1">
    <location>
        <position position="34"/>
    </location>
    <ligand>
        <name>substrate</name>
    </ligand>
</feature>
<feature type="binding site" evidence="1">
    <location>
        <begin position="57"/>
        <end position="60"/>
    </location>
    <ligand>
        <name>substrate</name>
    </ligand>
</feature>
<feature type="binding site" evidence="1">
    <location>
        <position position="114"/>
    </location>
    <ligand>
        <name>substrate</name>
    </ligand>
</feature>
<feature type="binding site" evidence="1">
    <location>
        <position position="154"/>
    </location>
    <ligand>
        <name>substrate</name>
    </ligand>
</feature>
<feature type="binding site" evidence="1">
    <location>
        <position position="332"/>
    </location>
    <ligand>
        <name>ATP</name>
        <dbReference type="ChEBI" id="CHEBI:30616"/>
    </ligand>
</feature>
<feature type="binding site" evidence="1">
    <location>
        <begin position="358"/>
        <end position="361"/>
    </location>
    <ligand>
        <name>ATP</name>
        <dbReference type="ChEBI" id="CHEBI:30616"/>
    </ligand>
</feature>
<organism>
    <name type="scientific">Pyrococcus furiosus (strain ATCC 43587 / DSM 3638 / JCM 8422 / Vc1)</name>
    <dbReference type="NCBI Taxonomy" id="186497"/>
    <lineage>
        <taxon>Archaea</taxon>
        <taxon>Methanobacteriati</taxon>
        <taxon>Methanobacteriota</taxon>
        <taxon>Thermococci</taxon>
        <taxon>Thermococcales</taxon>
        <taxon>Thermococcaceae</taxon>
        <taxon>Pyrococcus</taxon>
    </lineage>
</organism>
<name>PGK_PYRFU</name>
<sequence length="410" mass="46224">MFRLRDFEYYNRTVFLRVDLNSPMSNGKIISDARFRAVLPTIKYLIESGAKVVVGTHQGKPYSEEYSTTEEHARILSELLNMHVEYVEDIFGKYARERIKAMKPGEVIVLENLRFSAEEVKNATIEECEKTFFVRKLSQVIDLVVNDAFAAAHRSQPSLVGFARIKPMIMGFLMEKEVDALTKAYESEEKPRVYVLGGAKVDDSLKVAENVLRKEKADLILTGGLVGQLFTLAKGFDLGRENIKFLEKKGILKYVDWAEKILDEFYPYVRTPVDFAIDFKGERVEIDLLSDEKRLFDEYPILDIGSRTVEKYREILLKARIIVANGPMGVFEREEFAVGTIGVFKAIGESPAFSVIGGGHSIASIYKYNITGISHISTGGGAMLTFFAGEKLPVLEALKISYEKFSNLLS</sequence>